<dbReference type="EMBL" id="BX569695">
    <property type="protein sequence ID" value="CAE08794.1"/>
    <property type="molecule type" value="Genomic_DNA"/>
</dbReference>
<dbReference type="RefSeq" id="WP_011129132.1">
    <property type="nucleotide sequence ID" value="NC_005070.1"/>
</dbReference>
<dbReference type="SMR" id="Q7U3Z7"/>
<dbReference type="STRING" id="84588.SYNW2279"/>
<dbReference type="KEGG" id="syw:SYNW2279"/>
<dbReference type="eggNOG" id="COG1420">
    <property type="taxonomic scope" value="Bacteria"/>
</dbReference>
<dbReference type="HOGENOM" id="CLU_050019_1_0_3"/>
<dbReference type="Proteomes" id="UP000001422">
    <property type="component" value="Chromosome"/>
</dbReference>
<dbReference type="GO" id="GO:0003677">
    <property type="term" value="F:DNA binding"/>
    <property type="evidence" value="ECO:0007669"/>
    <property type="project" value="InterPro"/>
</dbReference>
<dbReference type="GO" id="GO:0045892">
    <property type="term" value="P:negative regulation of DNA-templated transcription"/>
    <property type="evidence" value="ECO:0007669"/>
    <property type="project" value="UniProtKB-UniRule"/>
</dbReference>
<dbReference type="Gene3D" id="3.30.450.40">
    <property type="match status" value="1"/>
</dbReference>
<dbReference type="Gene3D" id="3.30.390.60">
    <property type="entry name" value="Heat-inducible transcription repressor hrca homolog, domain 3"/>
    <property type="match status" value="1"/>
</dbReference>
<dbReference type="Gene3D" id="1.10.10.10">
    <property type="entry name" value="Winged helix-like DNA-binding domain superfamily/Winged helix DNA-binding domain"/>
    <property type="match status" value="1"/>
</dbReference>
<dbReference type="HAMAP" id="MF_00081">
    <property type="entry name" value="HrcA"/>
    <property type="match status" value="1"/>
</dbReference>
<dbReference type="InterPro" id="IPR029016">
    <property type="entry name" value="GAF-like_dom_sf"/>
</dbReference>
<dbReference type="InterPro" id="IPR002571">
    <property type="entry name" value="HrcA"/>
</dbReference>
<dbReference type="InterPro" id="IPR021153">
    <property type="entry name" value="HrcA_C"/>
</dbReference>
<dbReference type="InterPro" id="IPR036388">
    <property type="entry name" value="WH-like_DNA-bd_sf"/>
</dbReference>
<dbReference type="InterPro" id="IPR036390">
    <property type="entry name" value="WH_DNA-bd_sf"/>
</dbReference>
<dbReference type="InterPro" id="IPR023120">
    <property type="entry name" value="WHTH_transcript_rep_HrcA_IDD"/>
</dbReference>
<dbReference type="NCBIfam" id="TIGR00331">
    <property type="entry name" value="hrcA"/>
    <property type="match status" value="1"/>
</dbReference>
<dbReference type="PANTHER" id="PTHR34824">
    <property type="entry name" value="HEAT-INDUCIBLE TRANSCRIPTION REPRESSOR HRCA"/>
    <property type="match status" value="1"/>
</dbReference>
<dbReference type="PANTHER" id="PTHR34824:SF1">
    <property type="entry name" value="HEAT-INDUCIBLE TRANSCRIPTION REPRESSOR HRCA"/>
    <property type="match status" value="1"/>
</dbReference>
<dbReference type="Pfam" id="PF01628">
    <property type="entry name" value="HrcA"/>
    <property type="match status" value="1"/>
</dbReference>
<dbReference type="PIRSF" id="PIRSF005485">
    <property type="entry name" value="HrcA"/>
    <property type="match status" value="1"/>
</dbReference>
<dbReference type="SUPFAM" id="SSF55781">
    <property type="entry name" value="GAF domain-like"/>
    <property type="match status" value="1"/>
</dbReference>
<dbReference type="SUPFAM" id="SSF46785">
    <property type="entry name" value="Winged helix' DNA-binding domain"/>
    <property type="match status" value="1"/>
</dbReference>
<gene>
    <name evidence="1" type="primary">hrcA</name>
    <name type="ordered locus">SYNW2279</name>
</gene>
<evidence type="ECO:0000255" key="1">
    <source>
        <dbReference type="HAMAP-Rule" id="MF_00081"/>
    </source>
</evidence>
<organism>
    <name type="scientific">Parasynechococcus marenigrum (strain WH8102)</name>
    <dbReference type="NCBI Taxonomy" id="84588"/>
    <lineage>
        <taxon>Bacteria</taxon>
        <taxon>Bacillati</taxon>
        <taxon>Cyanobacteriota</taxon>
        <taxon>Cyanophyceae</taxon>
        <taxon>Synechococcales</taxon>
        <taxon>Prochlorococcaceae</taxon>
        <taxon>Parasynechococcus</taxon>
        <taxon>Parasynechococcus marenigrum</taxon>
    </lineage>
</organism>
<keyword id="KW-0678">Repressor</keyword>
<keyword id="KW-0346">Stress response</keyword>
<keyword id="KW-0804">Transcription</keyword>
<keyword id="KW-0805">Transcription regulation</keyword>
<proteinExistence type="inferred from homology"/>
<feature type="chain" id="PRO_0000182550" description="Heat-inducible transcription repressor HrcA">
    <location>
        <begin position="1"/>
        <end position="324"/>
    </location>
</feature>
<protein>
    <recommendedName>
        <fullName evidence="1">Heat-inducible transcription repressor HrcA</fullName>
    </recommendedName>
</protein>
<reference key="1">
    <citation type="journal article" date="2003" name="Nature">
        <title>The genome of a motile marine Synechococcus.</title>
        <authorList>
            <person name="Palenik B."/>
            <person name="Brahamsha B."/>
            <person name="Larimer F.W."/>
            <person name="Land M.L."/>
            <person name="Hauser L."/>
            <person name="Chain P."/>
            <person name="Lamerdin J.E."/>
            <person name="Regala W."/>
            <person name="Allen E.E."/>
            <person name="McCarren J."/>
            <person name="Paulsen I.T."/>
            <person name="Dufresne A."/>
            <person name="Partensky F."/>
            <person name="Webb E.A."/>
            <person name="Waterbury J."/>
        </authorList>
    </citation>
    <scope>NUCLEOTIDE SEQUENCE [LARGE SCALE GENOMIC DNA]</scope>
    <source>
        <strain>WH8102</strain>
    </source>
</reference>
<comment type="function">
    <text evidence="1">Negative regulator of class I heat shock genes (grpE-dnaK-dnaJ and groELS operons). Prevents heat-shock induction of these operons.</text>
</comment>
<comment type="similarity">
    <text evidence="1">Belongs to the HrcA family.</text>
</comment>
<sequence>MKPLSARQQQVLQATVHHYVDTMEPVGSRTLVQRFGIPASSATVRSAMGALEKRGLLTQPHTSAGRIPSALGYRCYVDDLLPEPGVAVQHLERELTGLSLRWAALDDLLQQLARRLTDFTGLMSLITRPQQPRAQLEAIRLVQSGDRLLVMLVEDSGRASHLNLRLPPGASDELTAIERWTDQQLEDGSINWRSLPPQLQRSGDVLRSALDHPSMSPETPLVVHGLSRLVAEPEFHSTAELRPLLELIDDQPCAVVSATDQPGVWIGEEHPQKALQACSVVQAPYRCGQEGVGQVALVGPMRMAYATAHAAVQRVARHLDLLLN</sequence>
<name>HRCA_PARMW</name>
<accession>Q7U3Z7</accession>